<keyword id="KW-0963">Cytoplasm</keyword>
<keyword id="KW-0704">Schiff base</keyword>
<keyword id="KW-0784">Thiamine biosynthesis</keyword>
<keyword id="KW-0808">Transferase</keyword>
<sequence length="255" mass="27034">MLHIGGKTFTSRLLLGTGKYPSFEVQKEAVNVSEAEILTFAVRRMNIFEASQPNFLEQLDLSKYTLLPNTAGASTADEAVRIARLAKASGLCDMIKVEVIGCSRSLLPDPVETLKASEMLLEEGFIVLPYTSDDVVLARKLEELGVHAIMPGASPIGSGQGLLNPLNLSFIIEQAKVPVIIDAGVGSPKDAAYAMELGADAVLLNTAVSGAKDPVKMAKAMKLAIESGRLGFEAGRIPLKNYGTASSPQEGMPAF</sequence>
<reference key="1">
    <citation type="journal article" date="2007" name="PLoS ONE">
        <title>Paradoxical DNA repair and peroxide resistance gene conservation in Bacillus pumilus SAFR-032.</title>
        <authorList>
            <person name="Gioia J."/>
            <person name="Yerrapragada S."/>
            <person name="Qin X."/>
            <person name="Jiang H."/>
            <person name="Igboeli O.C."/>
            <person name="Muzny D."/>
            <person name="Dugan-Rocha S."/>
            <person name="Ding Y."/>
            <person name="Hawes A."/>
            <person name="Liu W."/>
            <person name="Perez L."/>
            <person name="Kovar C."/>
            <person name="Dinh H."/>
            <person name="Lee S."/>
            <person name="Nazareth L."/>
            <person name="Blyth P."/>
            <person name="Holder M."/>
            <person name="Buhay C."/>
            <person name="Tirumalai M.R."/>
            <person name="Liu Y."/>
            <person name="Dasgupta I."/>
            <person name="Bokhetache L."/>
            <person name="Fujita M."/>
            <person name="Karouia F."/>
            <person name="Eswara Moorthy P."/>
            <person name="Siefert J."/>
            <person name="Uzman A."/>
            <person name="Buzumbo P."/>
            <person name="Verma A."/>
            <person name="Zwiya H."/>
            <person name="McWilliams B.D."/>
            <person name="Olowu A."/>
            <person name="Clinkenbeard K.D."/>
            <person name="Newcombe D."/>
            <person name="Golebiewski L."/>
            <person name="Petrosino J.F."/>
            <person name="Nicholson W.L."/>
            <person name="Fox G.E."/>
            <person name="Venkateswaran K."/>
            <person name="Highlander S.K."/>
            <person name="Weinstock G.M."/>
        </authorList>
    </citation>
    <scope>NUCLEOTIDE SEQUENCE [LARGE SCALE GENOMIC DNA]</scope>
    <source>
        <strain>SAFR-032</strain>
    </source>
</reference>
<feature type="chain" id="PRO_1000060248" description="Thiazole synthase">
    <location>
        <begin position="1"/>
        <end position="255"/>
    </location>
</feature>
<feature type="active site" description="Schiff-base intermediate with DXP" evidence="1">
    <location>
        <position position="96"/>
    </location>
</feature>
<feature type="binding site" evidence="1">
    <location>
        <position position="157"/>
    </location>
    <ligand>
        <name>1-deoxy-D-xylulose 5-phosphate</name>
        <dbReference type="ChEBI" id="CHEBI:57792"/>
    </ligand>
</feature>
<feature type="binding site" evidence="1">
    <location>
        <begin position="183"/>
        <end position="184"/>
    </location>
    <ligand>
        <name>1-deoxy-D-xylulose 5-phosphate</name>
        <dbReference type="ChEBI" id="CHEBI:57792"/>
    </ligand>
</feature>
<feature type="binding site" evidence="1">
    <location>
        <begin position="205"/>
        <end position="206"/>
    </location>
    <ligand>
        <name>1-deoxy-D-xylulose 5-phosphate</name>
        <dbReference type="ChEBI" id="CHEBI:57792"/>
    </ligand>
</feature>
<organism>
    <name type="scientific">Bacillus pumilus (strain SAFR-032)</name>
    <dbReference type="NCBI Taxonomy" id="315750"/>
    <lineage>
        <taxon>Bacteria</taxon>
        <taxon>Bacillati</taxon>
        <taxon>Bacillota</taxon>
        <taxon>Bacilli</taxon>
        <taxon>Bacillales</taxon>
        <taxon>Bacillaceae</taxon>
        <taxon>Bacillus</taxon>
    </lineage>
</organism>
<proteinExistence type="inferred from homology"/>
<accession>A8FC15</accession>
<evidence type="ECO:0000255" key="1">
    <source>
        <dbReference type="HAMAP-Rule" id="MF_00443"/>
    </source>
</evidence>
<name>THIG_BACP2</name>
<comment type="function">
    <text evidence="1">Catalyzes the rearrangement of 1-deoxy-D-xylulose 5-phosphate (DXP) to produce the thiazole phosphate moiety of thiamine. Sulfur is provided by the thiocarboxylate moiety of the carrier protein ThiS. In vitro, sulfur can be provided by H(2)S.</text>
</comment>
<comment type="catalytic activity">
    <reaction evidence="1">
        <text>[ThiS sulfur-carrier protein]-C-terminal-Gly-aminoethanethioate + 2-iminoacetate + 1-deoxy-D-xylulose 5-phosphate = [ThiS sulfur-carrier protein]-C-terminal Gly-Gly + 2-[(2R,5Z)-2-carboxy-4-methylthiazol-5(2H)-ylidene]ethyl phosphate + 2 H2O + H(+)</text>
        <dbReference type="Rhea" id="RHEA:26297"/>
        <dbReference type="Rhea" id="RHEA-COMP:12909"/>
        <dbReference type="Rhea" id="RHEA-COMP:19908"/>
        <dbReference type="ChEBI" id="CHEBI:15377"/>
        <dbReference type="ChEBI" id="CHEBI:15378"/>
        <dbReference type="ChEBI" id="CHEBI:57792"/>
        <dbReference type="ChEBI" id="CHEBI:62899"/>
        <dbReference type="ChEBI" id="CHEBI:77846"/>
        <dbReference type="ChEBI" id="CHEBI:90778"/>
        <dbReference type="ChEBI" id="CHEBI:232372"/>
        <dbReference type="EC" id="2.8.1.10"/>
    </reaction>
</comment>
<comment type="pathway">
    <text evidence="1">Cofactor biosynthesis; thiamine diphosphate biosynthesis.</text>
</comment>
<comment type="subunit">
    <text evidence="1">Homotetramer. Forms heterodimers with either ThiH or ThiS.</text>
</comment>
<comment type="subcellular location">
    <subcellularLocation>
        <location evidence="1">Cytoplasm</location>
    </subcellularLocation>
</comment>
<comment type="similarity">
    <text evidence="1">Belongs to the ThiG family.</text>
</comment>
<protein>
    <recommendedName>
        <fullName evidence="1">Thiazole synthase</fullName>
        <ecNumber evidence="1">2.8.1.10</ecNumber>
    </recommendedName>
</protein>
<dbReference type="EC" id="2.8.1.10" evidence="1"/>
<dbReference type="EMBL" id="CP000813">
    <property type="protein sequence ID" value="ABV61782.1"/>
    <property type="molecule type" value="Genomic_DNA"/>
</dbReference>
<dbReference type="RefSeq" id="WP_012009591.1">
    <property type="nucleotide sequence ID" value="NC_009848.4"/>
</dbReference>
<dbReference type="SMR" id="A8FC15"/>
<dbReference type="STRING" id="315750.BPUM_1098"/>
<dbReference type="GeneID" id="5620361"/>
<dbReference type="KEGG" id="bpu:BPUM_1098"/>
<dbReference type="eggNOG" id="COG2022">
    <property type="taxonomic scope" value="Bacteria"/>
</dbReference>
<dbReference type="HOGENOM" id="CLU_062233_1_0_9"/>
<dbReference type="OrthoDB" id="9805935at2"/>
<dbReference type="UniPathway" id="UPA00060"/>
<dbReference type="Proteomes" id="UP000001355">
    <property type="component" value="Chromosome"/>
</dbReference>
<dbReference type="GO" id="GO:0005737">
    <property type="term" value="C:cytoplasm"/>
    <property type="evidence" value="ECO:0007669"/>
    <property type="project" value="UniProtKB-SubCell"/>
</dbReference>
<dbReference type="GO" id="GO:1990107">
    <property type="term" value="F:thiazole synthase activity"/>
    <property type="evidence" value="ECO:0007669"/>
    <property type="project" value="UniProtKB-EC"/>
</dbReference>
<dbReference type="GO" id="GO:0009229">
    <property type="term" value="P:thiamine diphosphate biosynthetic process"/>
    <property type="evidence" value="ECO:0007669"/>
    <property type="project" value="UniProtKB-UniRule"/>
</dbReference>
<dbReference type="CDD" id="cd04728">
    <property type="entry name" value="ThiG"/>
    <property type="match status" value="1"/>
</dbReference>
<dbReference type="FunFam" id="3.20.20.70:FF:000049">
    <property type="entry name" value="Thiazole synthase"/>
    <property type="match status" value="1"/>
</dbReference>
<dbReference type="Gene3D" id="3.20.20.70">
    <property type="entry name" value="Aldolase class I"/>
    <property type="match status" value="1"/>
</dbReference>
<dbReference type="HAMAP" id="MF_00443">
    <property type="entry name" value="ThiG"/>
    <property type="match status" value="1"/>
</dbReference>
<dbReference type="InterPro" id="IPR013785">
    <property type="entry name" value="Aldolase_TIM"/>
</dbReference>
<dbReference type="InterPro" id="IPR033983">
    <property type="entry name" value="Thiazole_synthase_ThiG"/>
</dbReference>
<dbReference type="InterPro" id="IPR008867">
    <property type="entry name" value="ThiG"/>
</dbReference>
<dbReference type="PANTHER" id="PTHR34266">
    <property type="entry name" value="THIAZOLE SYNTHASE"/>
    <property type="match status" value="1"/>
</dbReference>
<dbReference type="PANTHER" id="PTHR34266:SF2">
    <property type="entry name" value="THIAZOLE SYNTHASE"/>
    <property type="match status" value="1"/>
</dbReference>
<dbReference type="Pfam" id="PF05690">
    <property type="entry name" value="ThiG"/>
    <property type="match status" value="1"/>
</dbReference>
<dbReference type="SUPFAM" id="SSF110399">
    <property type="entry name" value="ThiG-like"/>
    <property type="match status" value="1"/>
</dbReference>
<gene>
    <name evidence="1" type="primary">thiG</name>
    <name type="ordered locus">BPUM_1098</name>
</gene>